<gene>
    <name evidence="1" type="primary">rpmI</name>
    <name type="ordered locus">BQ00750</name>
</gene>
<sequence>MPKMKTKSSAKKRFKITASGKVKVAAAGKRHGMIKRSNKFIRDARGTMVLSDQDAKKVIQYYLPNGF</sequence>
<feature type="chain" id="PRO_0000177329" description="Large ribosomal subunit protein bL35">
    <location>
        <begin position="1"/>
        <end position="67"/>
    </location>
</feature>
<accession>Q6G1G3</accession>
<organism>
    <name type="scientific">Bartonella quintana (strain Toulouse)</name>
    <name type="common">Rochalimaea quintana</name>
    <dbReference type="NCBI Taxonomy" id="283165"/>
    <lineage>
        <taxon>Bacteria</taxon>
        <taxon>Pseudomonadati</taxon>
        <taxon>Pseudomonadota</taxon>
        <taxon>Alphaproteobacteria</taxon>
        <taxon>Hyphomicrobiales</taxon>
        <taxon>Bartonellaceae</taxon>
        <taxon>Bartonella</taxon>
    </lineage>
</organism>
<comment type="similarity">
    <text evidence="1">Belongs to the bacterial ribosomal protein bL35 family.</text>
</comment>
<evidence type="ECO:0000255" key="1">
    <source>
        <dbReference type="HAMAP-Rule" id="MF_00514"/>
    </source>
</evidence>
<evidence type="ECO:0000305" key="2"/>
<protein>
    <recommendedName>
        <fullName evidence="1">Large ribosomal subunit protein bL35</fullName>
    </recommendedName>
    <alternativeName>
        <fullName evidence="2">50S ribosomal protein L35</fullName>
    </alternativeName>
</protein>
<keyword id="KW-0687">Ribonucleoprotein</keyword>
<keyword id="KW-0689">Ribosomal protein</keyword>
<name>RL35_BARQU</name>
<dbReference type="EMBL" id="BX897700">
    <property type="protein sequence ID" value="CAF25582.1"/>
    <property type="molecule type" value="Genomic_DNA"/>
</dbReference>
<dbReference type="RefSeq" id="WP_011178909.1">
    <property type="nucleotide sequence ID" value="NC_005955.1"/>
</dbReference>
<dbReference type="SMR" id="Q6G1G3"/>
<dbReference type="GeneID" id="56532465"/>
<dbReference type="KEGG" id="bqu:BQ00750"/>
<dbReference type="eggNOG" id="COG0291">
    <property type="taxonomic scope" value="Bacteria"/>
</dbReference>
<dbReference type="HOGENOM" id="CLU_169643_2_1_5"/>
<dbReference type="OrthoDB" id="9804851at2"/>
<dbReference type="Proteomes" id="UP000000597">
    <property type="component" value="Chromosome"/>
</dbReference>
<dbReference type="GO" id="GO:0022625">
    <property type="term" value="C:cytosolic large ribosomal subunit"/>
    <property type="evidence" value="ECO:0007669"/>
    <property type="project" value="TreeGrafter"/>
</dbReference>
<dbReference type="GO" id="GO:0003735">
    <property type="term" value="F:structural constituent of ribosome"/>
    <property type="evidence" value="ECO:0007669"/>
    <property type="project" value="InterPro"/>
</dbReference>
<dbReference type="GO" id="GO:0006412">
    <property type="term" value="P:translation"/>
    <property type="evidence" value="ECO:0007669"/>
    <property type="project" value="UniProtKB-UniRule"/>
</dbReference>
<dbReference type="FunFam" id="4.10.410.60:FF:000001">
    <property type="entry name" value="50S ribosomal protein L35"/>
    <property type="match status" value="1"/>
</dbReference>
<dbReference type="Gene3D" id="4.10.410.60">
    <property type="match status" value="1"/>
</dbReference>
<dbReference type="HAMAP" id="MF_00514">
    <property type="entry name" value="Ribosomal_bL35"/>
    <property type="match status" value="1"/>
</dbReference>
<dbReference type="InterPro" id="IPR001706">
    <property type="entry name" value="Ribosomal_bL35"/>
</dbReference>
<dbReference type="InterPro" id="IPR021137">
    <property type="entry name" value="Ribosomal_bL35-like"/>
</dbReference>
<dbReference type="InterPro" id="IPR018265">
    <property type="entry name" value="Ribosomal_bL35_CS"/>
</dbReference>
<dbReference type="InterPro" id="IPR037229">
    <property type="entry name" value="Ribosomal_bL35_sf"/>
</dbReference>
<dbReference type="NCBIfam" id="TIGR00001">
    <property type="entry name" value="rpmI_bact"/>
    <property type="match status" value="1"/>
</dbReference>
<dbReference type="PANTHER" id="PTHR33343">
    <property type="entry name" value="54S RIBOSOMAL PROTEIN BL35M"/>
    <property type="match status" value="1"/>
</dbReference>
<dbReference type="PANTHER" id="PTHR33343:SF1">
    <property type="entry name" value="LARGE RIBOSOMAL SUBUNIT PROTEIN BL35M"/>
    <property type="match status" value="1"/>
</dbReference>
<dbReference type="Pfam" id="PF01632">
    <property type="entry name" value="Ribosomal_L35p"/>
    <property type="match status" value="1"/>
</dbReference>
<dbReference type="PRINTS" id="PR00064">
    <property type="entry name" value="RIBOSOMALL35"/>
</dbReference>
<dbReference type="SUPFAM" id="SSF143034">
    <property type="entry name" value="L35p-like"/>
    <property type="match status" value="1"/>
</dbReference>
<dbReference type="PROSITE" id="PS00936">
    <property type="entry name" value="RIBOSOMAL_L35"/>
    <property type="match status" value="1"/>
</dbReference>
<reference key="1">
    <citation type="journal article" date="2004" name="Proc. Natl. Acad. Sci. U.S.A.">
        <title>The louse-borne human pathogen Bartonella quintana is a genomic derivative of the zoonotic agent Bartonella henselae.</title>
        <authorList>
            <person name="Alsmark U.C.M."/>
            <person name="Frank A.C."/>
            <person name="Karlberg E.O."/>
            <person name="Legault B.-A."/>
            <person name="Ardell D.H."/>
            <person name="Canbaeck B."/>
            <person name="Eriksson A.-S."/>
            <person name="Naeslund A.K."/>
            <person name="Handley S.A."/>
            <person name="Huvet M."/>
            <person name="La Scola B."/>
            <person name="Holmberg M."/>
            <person name="Andersson S.G.E."/>
        </authorList>
    </citation>
    <scope>NUCLEOTIDE SEQUENCE [LARGE SCALE GENOMIC DNA]</scope>
    <source>
        <strain>Toulouse</strain>
    </source>
</reference>
<proteinExistence type="inferred from homology"/>